<sequence>MHSTKVTYPEPMQLSGILDQYESFQVTPCIGTEFPKANLAEWLHSPNADALLRDLAITIAQRGVVFFRAQTDLDGELQKELTHRLGVQSGKPAGHRLSKHPLHLIRKDDPEMGVLDPGRQQKLHGVENTQKRQRAVLEYHSDGSYEVCPPDFTMLRMTEIPPTGGDTLWASGYELYDRLSTPYQKFFESLTAQHEVPSLRKLAETEPGIYDGPRGAPANTDMQFKQSHPMVRTHPVTGWKTLFAGGLHCRRVNDVTDFESEQLLSKIISLVGDNHDLQVRFRWNNPGDVAIWDNRCVLHCPTQDHYGLGGRMGYRTMGIAEKPYLDPNSPSRQEALAAAAK</sequence>
<feature type="chain" id="PRO_0000450494" description="Alpha-ketoglutarate-dependent dioxygenase oryG">
    <location>
        <begin position="1"/>
        <end position="341"/>
    </location>
</feature>
<feature type="binding site" evidence="1">
    <location>
        <position position="100"/>
    </location>
    <ligand>
        <name>substrate</name>
    </ligand>
</feature>
<feature type="binding site" evidence="1">
    <location>
        <position position="140"/>
    </location>
    <ligand>
        <name>Fe cation</name>
        <dbReference type="ChEBI" id="CHEBI:24875"/>
        <note>catalytic</note>
    </ligand>
</feature>
<feature type="binding site" evidence="1">
    <location>
        <position position="142"/>
    </location>
    <ligand>
        <name>Fe cation</name>
        <dbReference type="ChEBI" id="CHEBI:24875"/>
        <note>catalytic</note>
    </ligand>
</feature>
<feature type="binding site" evidence="1">
    <location>
        <position position="167"/>
    </location>
    <ligand>
        <name>2-oxoglutarate</name>
        <dbReference type="ChEBI" id="CHEBI:16810"/>
    </ligand>
</feature>
<feature type="binding site" evidence="1">
    <location>
        <position position="299"/>
    </location>
    <ligand>
        <name>Fe cation</name>
        <dbReference type="ChEBI" id="CHEBI:24875"/>
        <note>catalytic</note>
    </ligand>
</feature>
<feature type="binding site" evidence="1">
    <location>
        <position position="311"/>
    </location>
    <ligand>
        <name>2-oxoglutarate</name>
        <dbReference type="ChEBI" id="CHEBI:16810"/>
    </ligand>
</feature>
<feature type="binding site" evidence="1">
    <location>
        <position position="315"/>
    </location>
    <ligand>
        <name>2-oxoglutarate</name>
        <dbReference type="ChEBI" id="CHEBI:16810"/>
    </ligand>
</feature>
<feature type="binding site" evidence="1">
    <location>
        <position position="315"/>
    </location>
    <ligand>
        <name>substrate</name>
    </ligand>
</feature>
<organism>
    <name type="scientific">Aspergillus oryzae (strain ATCC 42149 / RIB 40)</name>
    <name type="common">Yellow koji mold</name>
    <dbReference type="NCBI Taxonomy" id="510516"/>
    <lineage>
        <taxon>Eukaryota</taxon>
        <taxon>Fungi</taxon>
        <taxon>Dikarya</taxon>
        <taxon>Ascomycota</taxon>
        <taxon>Pezizomycotina</taxon>
        <taxon>Eurotiomycetes</taxon>
        <taxon>Eurotiomycetidae</taxon>
        <taxon>Eurotiales</taxon>
        <taxon>Aspergillaceae</taxon>
        <taxon>Aspergillus</taxon>
        <taxon>Aspergillus subgen. Circumdati</taxon>
    </lineage>
</organism>
<gene>
    <name evidence="3" type="primary">oryG</name>
    <name type="ORF">AO090010000168</name>
</gene>
<name>ORYG_ASPOR</name>
<protein>
    <recommendedName>
        <fullName evidence="3">Alpha-ketoglutarate-dependent dioxygenase oryG</fullName>
        <ecNumber evidence="5">1.14.11.-</ecNumber>
    </recommendedName>
    <alternativeName>
        <fullName evidence="3">Oryzines biosynthesis cluster protein G</fullName>
    </alternativeName>
</protein>
<comment type="function">
    <text evidence="2 5">Alpha-ketoglutarate-dependent dioxygenase; part of the gene cluster that mediates the biosynthesis of oryzines, natural products with an unusual maleidride backbone (PubMed:30104550). The two subunits of the fungal fatty acid synthase oryfasA and oryfasB probably form octenoic acid (Probable). This fatty acid is most likely activated by the acyl-CoA ligase oryP to give octenyl-CoA before the citrate synthase-like protein oryE catalyzes condensation with oxaloacetate to form tricarboxylic acid (Probable). The next steps of the pathways are conjectural, but a favorite possible route has been proposed, beginning with decarboxylation and concomitant dehydration by the decarboxylase oryM, followed by tautomerization, which may lead to the production of a diene intermediate (Probable). Reduction of this diene intermediate could give the known metabolite piliformic acid (Probable). On the pathway to oryzine B and oryzine A, however, hydroxylation of the diene by the alpha-ketoglutarate-dependent dioxygenase oryG and lactonisation by the lactonohydrolases oryH or oryL could give oryzine B directly (Probable). Finally, enoyl reduction by the dehydrogenase oryD would then convert oryzine B into oryzine A (Probable).</text>
</comment>
<comment type="cofactor">
    <cofactor evidence="1">
        <name>Fe(2+)</name>
        <dbReference type="ChEBI" id="CHEBI:29033"/>
    </cofactor>
    <text evidence="1">Binds 1 Fe(2+) ion per subunit.</text>
</comment>
<comment type="pathway">
    <text evidence="5">Secondary metabolite biosynthesis.</text>
</comment>
<comment type="similarity">
    <text evidence="4">Belongs to the TfdA dioxygenase family.</text>
</comment>
<accession>Q2TXF3</accession>
<proteinExistence type="inferred from homology"/>
<keyword id="KW-0223">Dioxygenase</keyword>
<keyword id="KW-0408">Iron</keyword>
<keyword id="KW-0479">Metal-binding</keyword>
<keyword id="KW-0560">Oxidoreductase</keyword>
<keyword id="KW-1185">Reference proteome</keyword>
<reference key="1">
    <citation type="journal article" date="2005" name="Nature">
        <title>Genome sequencing and analysis of Aspergillus oryzae.</title>
        <authorList>
            <person name="Machida M."/>
            <person name="Asai K."/>
            <person name="Sano M."/>
            <person name="Tanaka T."/>
            <person name="Kumagai T."/>
            <person name="Terai G."/>
            <person name="Kusumoto K."/>
            <person name="Arima T."/>
            <person name="Akita O."/>
            <person name="Kashiwagi Y."/>
            <person name="Abe K."/>
            <person name="Gomi K."/>
            <person name="Horiuchi H."/>
            <person name="Kitamoto K."/>
            <person name="Kobayashi T."/>
            <person name="Takeuchi M."/>
            <person name="Denning D.W."/>
            <person name="Galagan J.E."/>
            <person name="Nierman W.C."/>
            <person name="Yu J."/>
            <person name="Archer D.B."/>
            <person name="Bennett J.W."/>
            <person name="Bhatnagar D."/>
            <person name="Cleveland T.E."/>
            <person name="Fedorova N.D."/>
            <person name="Gotoh O."/>
            <person name="Horikawa H."/>
            <person name="Hosoyama A."/>
            <person name="Ichinomiya M."/>
            <person name="Igarashi R."/>
            <person name="Iwashita K."/>
            <person name="Juvvadi P.R."/>
            <person name="Kato M."/>
            <person name="Kato Y."/>
            <person name="Kin T."/>
            <person name="Kokubun A."/>
            <person name="Maeda H."/>
            <person name="Maeyama N."/>
            <person name="Maruyama J."/>
            <person name="Nagasaki H."/>
            <person name="Nakajima T."/>
            <person name="Oda K."/>
            <person name="Okada K."/>
            <person name="Paulsen I."/>
            <person name="Sakamoto K."/>
            <person name="Sawano T."/>
            <person name="Takahashi M."/>
            <person name="Takase K."/>
            <person name="Terabayashi Y."/>
            <person name="Wortman J.R."/>
            <person name="Yamada O."/>
            <person name="Yamagata Y."/>
            <person name="Anazawa H."/>
            <person name="Hata Y."/>
            <person name="Koide Y."/>
            <person name="Komori T."/>
            <person name="Koyama Y."/>
            <person name="Minetoki T."/>
            <person name="Suharnan S."/>
            <person name="Tanaka A."/>
            <person name="Isono K."/>
            <person name="Kuhara S."/>
            <person name="Ogasawara N."/>
            <person name="Kikuchi H."/>
        </authorList>
    </citation>
    <scope>NUCLEOTIDE SEQUENCE [LARGE SCALE GENOMIC DNA]</scope>
    <source>
        <strain>ATCC 42149 / RIB 40</strain>
    </source>
</reference>
<reference key="2">
    <citation type="journal article" date="2018" name="J. Fungi">
        <title>Oryzines A &amp; B, maleidride congeners from Aspergillus oryzae and their putative biosynthesis.</title>
        <authorList>
            <person name="Wasil Z."/>
            <person name="Kuhnert E."/>
            <person name="Simpson T.J."/>
            <person name="Cox R.J."/>
        </authorList>
    </citation>
    <scope>FUNCTION</scope>
    <scope>PATHWAY</scope>
</reference>
<evidence type="ECO:0000250" key="1">
    <source>
        <dbReference type="UniProtKB" id="P37610"/>
    </source>
</evidence>
<evidence type="ECO:0000269" key="2">
    <source>
    </source>
</evidence>
<evidence type="ECO:0000303" key="3">
    <source>
    </source>
</evidence>
<evidence type="ECO:0000305" key="4"/>
<evidence type="ECO:0000305" key="5">
    <source>
    </source>
</evidence>
<dbReference type="EC" id="1.14.11.-" evidence="5"/>
<dbReference type="EMBL" id="BA000056">
    <property type="protein sequence ID" value="BAE66070.1"/>
    <property type="molecule type" value="Genomic_DNA"/>
</dbReference>
<dbReference type="RefSeq" id="XP_001827203.1">
    <property type="nucleotide sequence ID" value="XM_001827151.1"/>
</dbReference>
<dbReference type="SMR" id="Q2TXF3"/>
<dbReference type="EnsemblFungi" id="BAE66070">
    <property type="protein sequence ID" value="BAE66070"/>
    <property type="gene ID" value="AO090010000168"/>
</dbReference>
<dbReference type="GeneID" id="5999337"/>
<dbReference type="KEGG" id="aor:AO090010000168"/>
<dbReference type="VEuPathDB" id="FungiDB:AO090010000168"/>
<dbReference type="HOGENOM" id="CLU_036005_1_0_1"/>
<dbReference type="OMA" id="ITRNHDC"/>
<dbReference type="OrthoDB" id="12097at5052"/>
<dbReference type="Proteomes" id="UP000006564">
    <property type="component" value="Chromosome 8"/>
</dbReference>
<dbReference type="GO" id="GO:0005737">
    <property type="term" value="C:cytoplasm"/>
    <property type="evidence" value="ECO:0007669"/>
    <property type="project" value="TreeGrafter"/>
</dbReference>
<dbReference type="GO" id="GO:0016706">
    <property type="term" value="F:2-oxoglutarate-dependent dioxygenase activity"/>
    <property type="evidence" value="ECO:0007669"/>
    <property type="project" value="TreeGrafter"/>
</dbReference>
<dbReference type="GO" id="GO:0046872">
    <property type="term" value="F:metal ion binding"/>
    <property type="evidence" value="ECO:0007669"/>
    <property type="project" value="UniProtKB-KW"/>
</dbReference>
<dbReference type="Gene3D" id="3.60.130.10">
    <property type="entry name" value="Clavaminate synthase-like"/>
    <property type="match status" value="1"/>
</dbReference>
<dbReference type="InterPro" id="IPR051323">
    <property type="entry name" value="AtsK-like"/>
</dbReference>
<dbReference type="InterPro" id="IPR042098">
    <property type="entry name" value="TauD-like_sf"/>
</dbReference>
<dbReference type="InterPro" id="IPR003819">
    <property type="entry name" value="TauD/TfdA-like"/>
</dbReference>
<dbReference type="PANTHER" id="PTHR30468">
    <property type="entry name" value="ALPHA-KETOGLUTARATE-DEPENDENT SULFONATE DIOXYGENASE"/>
    <property type="match status" value="1"/>
</dbReference>
<dbReference type="PANTHER" id="PTHR30468:SF10">
    <property type="entry name" value="TAUD_TFDA-LIKE DOMAIN-CONTAINING PROTEIN"/>
    <property type="match status" value="1"/>
</dbReference>
<dbReference type="Pfam" id="PF02668">
    <property type="entry name" value="TauD"/>
    <property type="match status" value="1"/>
</dbReference>
<dbReference type="SUPFAM" id="SSF51197">
    <property type="entry name" value="Clavaminate synthase-like"/>
    <property type="match status" value="1"/>
</dbReference>